<feature type="chain" id="PRO_1000212464" description="Ribosomal RNA large subunit methyltransferase H">
    <location>
        <begin position="1"/>
        <end position="159"/>
    </location>
</feature>
<feature type="binding site" evidence="1">
    <location>
        <position position="76"/>
    </location>
    <ligand>
        <name>S-adenosyl-L-methionine</name>
        <dbReference type="ChEBI" id="CHEBI:59789"/>
    </ligand>
</feature>
<feature type="binding site" evidence="1">
    <location>
        <position position="108"/>
    </location>
    <ligand>
        <name>S-adenosyl-L-methionine</name>
        <dbReference type="ChEBI" id="CHEBI:59789"/>
    </ligand>
</feature>
<feature type="binding site" evidence="1">
    <location>
        <begin position="127"/>
        <end position="132"/>
    </location>
    <ligand>
        <name>S-adenosyl-L-methionine</name>
        <dbReference type="ChEBI" id="CHEBI:59789"/>
    </ligand>
</feature>
<comment type="function">
    <text evidence="1">Specifically methylates the pseudouridine at position 1915 (m3Psi1915) in 23S rRNA.</text>
</comment>
<comment type="catalytic activity">
    <reaction evidence="1">
        <text>pseudouridine(1915) in 23S rRNA + S-adenosyl-L-methionine = N(3)-methylpseudouridine(1915) in 23S rRNA + S-adenosyl-L-homocysteine + H(+)</text>
        <dbReference type="Rhea" id="RHEA:42752"/>
        <dbReference type="Rhea" id="RHEA-COMP:10221"/>
        <dbReference type="Rhea" id="RHEA-COMP:10222"/>
        <dbReference type="ChEBI" id="CHEBI:15378"/>
        <dbReference type="ChEBI" id="CHEBI:57856"/>
        <dbReference type="ChEBI" id="CHEBI:59789"/>
        <dbReference type="ChEBI" id="CHEBI:65314"/>
        <dbReference type="ChEBI" id="CHEBI:74486"/>
        <dbReference type="EC" id="2.1.1.177"/>
    </reaction>
</comment>
<comment type="subunit">
    <text evidence="1">Homodimer.</text>
</comment>
<comment type="subcellular location">
    <subcellularLocation>
        <location evidence="1">Cytoplasm</location>
    </subcellularLocation>
</comment>
<comment type="similarity">
    <text evidence="1">Belongs to the RNA methyltransferase RlmH family.</text>
</comment>
<keyword id="KW-0963">Cytoplasm</keyword>
<keyword id="KW-0489">Methyltransferase</keyword>
<keyword id="KW-0698">rRNA processing</keyword>
<keyword id="KW-0949">S-adenosyl-L-methionine</keyword>
<keyword id="KW-0808">Transferase</keyword>
<protein>
    <recommendedName>
        <fullName evidence="1">Ribosomal RNA large subunit methyltransferase H</fullName>
        <ecNumber evidence="1">2.1.1.177</ecNumber>
    </recommendedName>
    <alternativeName>
        <fullName evidence="1">23S rRNA (pseudouridine1915-N3)-methyltransferase</fullName>
    </alternativeName>
    <alternativeName>
        <fullName evidence="1">23S rRNA m3Psi1915 methyltransferase</fullName>
    </alternativeName>
    <alternativeName>
        <fullName evidence="1">rRNA (pseudouridine-N3-)-methyltransferase RlmH</fullName>
    </alternativeName>
</protein>
<evidence type="ECO:0000255" key="1">
    <source>
        <dbReference type="HAMAP-Rule" id="MF_00658"/>
    </source>
</evidence>
<accession>C0MGS7</accession>
<reference key="1">
    <citation type="journal article" date="2009" name="PLoS Pathog.">
        <title>Genomic evidence for the evolution of Streptococcus equi: host restriction, increased virulence, and genetic exchange with human pathogens.</title>
        <authorList>
            <person name="Holden M.T.G."/>
            <person name="Heather Z."/>
            <person name="Paillot R."/>
            <person name="Steward K.F."/>
            <person name="Webb K."/>
            <person name="Ainslie F."/>
            <person name="Jourdan T."/>
            <person name="Bason N.C."/>
            <person name="Holroyd N.E."/>
            <person name="Mungall K."/>
            <person name="Quail M.A."/>
            <person name="Sanders M."/>
            <person name="Simmonds M."/>
            <person name="Willey D."/>
            <person name="Brooks K."/>
            <person name="Aanensen D.M."/>
            <person name="Spratt B.G."/>
            <person name="Jolley K.A."/>
            <person name="Maiden M.C.J."/>
            <person name="Kehoe M."/>
            <person name="Chanter N."/>
            <person name="Bentley S.D."/>
            <person name="Robinson C."/>
            <person name="Maskell D.J."/>
            <person name="Parkhill J."/>
            <person name="Waller A.S."/>
        </authorList>
    </citation>
    <scope>NUCLEOTIDE SEQUENCE [LARGE SCALE GENOMIC DNA]</scope>
    <source>
        <strain>H70</strain>
    </source>
</reference>
<dbReference type="EC" id="2.1.1.177" evidence="1"/>
<dbReference type="EMBL" id="FM204884">
    <property type="protein sequence ID" value="CAX00924.1"/>
    <property type="molecule type" value="Genomic_DNA"/>
</dbReference>
<dbReference type="SMR" id="C0MGS7"/>
<dbReference type="KEGG" id="seq:SZO_19390"/>
<dbReference type="eggNOG" id="COG1576">
    <property type="taxonomic scope" value="Bacteria"/>
</dbReference>
<dbReference type="HOGENOM" id="CLU_100552_0_0_9"/>
<dbReference type="Proteomes" id="UP000001368">
    <property type="component" value="Chromosome"/>
</dbReference>
<dbReference type="GO" id="GO:0005737">
    <property type="term" value="C:cytoplasm"/>
    <property type="evidence" value="ECO:0007669"/>
    <property type="project" value="UniProtKB-SubCell"/>
</dbReference>
<dbReference type="GO" id="GO:0070038">
    <property type="term" value="F:rRNA (pseudouridine-N3-)-methyltransferase activity"/>
    <property type="evidence" value="ECO:0007669"/>
    <property type="project" value="UniProtKB-UniRule"/>
</dbReference>
<dbReference type="CDD" id="cd18081">
    <property type="entry name" value="RlmH-like"/>
    <property type="match status" value="1"/>
</dbReference>
<dbReference type="Gene3D" id="3.40.1280.10">
    <property type="match status" value="1"/>
</dbReference>
<dbReference type="HAMAP" id="MF_00658">
    <property type="entry name" value="23SrRNA_methyltr_H"/>
    <property type="match status" value="1"/>
</dbReference>
<dbReference type="InterPro" id="IPR029028">
    <property type="entry name" value="Alpha/beta_knot_MTases"/>
</dbReference>
<dbReference type="InterPro" id="IPR003742">
    <property type="entry name" value="RlmH-like"/>
</dbReference>
<dbReference type="InterPro" id="IPR029026">
    <property type="entry name" value="tRNA_m1G_MTases_N"/>
</dbReference>
<dbReference type="NCBIfam" id="NF000985">
    <property type="entry name" value="PRK00103.1-3"/>
    <property type="match status" value="1"/>
</dbReference>
<dbReference type="NCBIfam" id="TIGR00246">
    <property type="entry name" value="tRNA_RlmH_YbeA"/>
    <property type="match status" value="1"/>
</dbReference>
<dbReference type="PANTHER" id="PTHR33603">
    <property type="entry name" value="METHYLTRANSFERASE"/>
    <property type="match status" value="1"/>
</dbReference>
<dbReference type="PANTHER" id="PTHR33603:SF1">
    <property type="entry name" value="RIBOSOMAL RNA LARGE SUBUNIT METHYLTRANSFERASE H"/>
    <property type="match status" value="1"/>
</dbReference>
<dbReference type="Pfam" id="PF02590">
    <property type="entry name" value="SPOUT_MTase"/>
    <property type="match status" value="1"/>
</dbReference>
<dbReference type="PIRSF" id="PIRSF004505">
    <property type="entry name" value="MT_bac"/>
    <property type="match status" value="1"/>
</dbReference>
<dbReference type="SUPFAM" id="SSF75217">
    <property type="entry name" value="alpha/beta knot"/>
    <property type="match status" value="1"/>
</dbReference>
<name>RLMH_STRS7</name>
<gene>
    <name evidence="1" type="primary">rlmH</name>
    <name type="ordered locus">SZO_19390</name>
</gene>
<organism>
    <name type="scientific">Streptococcus equi subsp. zooepidemicus (strain H70)</name>
    <dbReference type="NCBI Taxonomy" id="553483"/>
    <lineage>
        <taxon>Bacteria</taxon>
        <taxon>Bacillati</taxon>
        <taxon>Bacillota</taxon>
        <taxon>Bacilli</taxon>
        <taxon>Lactobacillales</taxon>
        <taxon>Streptococcaceae</taxon>
        <taxon>Streptococcus</taxon>
    </lineage>
</organism>
<proteinExistence type="inferred from homology"/>
<sequence length="159" mass="18010">MKIKLICVGKLKEAYLRDGIAEYQKRLSRFCQCDIIELADEKTPDKASHAEKQQIMAKEADRIKKKLGQRDFVIALAIEGKQLASEQFSHLLSEVTVKGYSDIAFVIGGSLGLDQSIKNRANLLMSFGLLTLPHQLMRLVLIEQVYRAFMIQQGSPYHK</sequence>